<sequence length="237" mass="27323">MRQHVNPLSRFFQLPLELPAPEQLFDDPGRPIHLDIGCARGICLQELAALRPDRNHLGVEIRRPLVRSAQRDRDQLERLNLHYLFCNANVSLEGWMAALPQDRLQLVSIQFPDPWFKRRHRKRRVLQPSLLLAIAATLQPGRELFVQSDVLAVIDPMVALVELSGCFDRPAEDARPWRADNPLPVPTERERYVQELGLPAYRVLYRRNRQPLPDPEELEIAWQRVDNPANDAVPPDG</sequence>
<reference key="1">
    <citation type="submission" date="2006-05" db="EMBL/GenBank/DDBJ databases">
        <authorList>
            <consortium name="Genoscope"/>
        </authorList>
    </citation>
    <scope>NUCLEOTIDE SEQUENCE [LARGE SCALE GENOMIC DNA]</scope>
    <source>
        <strain>WH7803</strain>
    </source>
</reference>
<comment type="function">
    <text evidence="2">Catalyzes the formation of N(7)-methylguanine at position 46 (m7G46) in tRNA.</text>
</comment>
<comment type="catalytic activity">
    <reaction evidence="2">
        <text>guanosine(46) in tRNA + S-adenosyl-L-methionine = N(7)-methylguanosine(46) in tRNA + S-adenosyl-L-homocysteine</text>
        <dbReference type="Rhea" id="RHEA:42708"/>
        <dbReference type="Rhea" id="RHEA-COMP:10188"/>
        <dbReference type="Rhea" id="RHEA-COMP:10189"/>
        <dbReference type="ChEBI" id="CHEBI:57856"/>
        <dbReference type="ChEBI" id="CHEBI:59789"/>
        <dbReference type="ChEBI" id="CHEBI:74269"/>
        <dbReference type="ChEBI" id="CHEBI:74480"/>
        <dbReference type="EC" id="2.1.1.33"/>
    </reaction>
</comment>
<comment type="pathway">
    <text evidence="2">tRNA modification; N(7)-methylguanine-tRNA biosynthesis.</text>
</comment>
<comment type="similarity">
    <text evidence="2">Belongs to the class I-like SAM-binding methyltransferase superfamily. TrmB family.</text>
</comment>
<proteinExistence type="inferred from homology"/>
<feature type="chain" id="PRO_1000064414" description="tRNA (guanine-N(7)-)-methyltransferase">
    <location>
        <begin position="1"/>
        <end position="237"/>
    </location>
</feature>
<feature type="active site" evidence="1">
    <location>
        <position position="113"/>
    </location>
</feature>
<feature type="binding site" evidence="2">
    <location>
        <position position="35"/>
    </location>
    <ligand>
        <name>S-adenosyl-L-methionine</name>
        <dbReference type="ChEBI" id="CHEBI:59789"/>
    </ligand>
</feature>
<feature type="binding site" evidence="2">
    <location>
        <position position="60"/>
    </location>
    <ligand>
        <name>S-adenosyl-L-methionine</name>
        <dbReference type="ChEBI" id="CHEBI:59789"/>
    </ligand>
</feature>
<feature type="binding site" evidence="2">
    <location>
        <position position="87"/>
    </location>
    <ligand>
        <name>S-adenosyl-L-methionine</name>
        <dbReference type="ChEBI" id="CHEBI:59789"/>
    </ligand>
</feature>
<feature type="binding site" evidence="2">
    <location>
        <position position="113"/>
    </location>
    <ligand>
        <name>S-adenosyl-L-methionine</name>
        <dbReference type="ChEBI" id="CHEBI:59789"/>
    </ligand>
</feature>
<feature type="binding site" evidence="2">
    <location>
        <position position="117"/>
    </location>
    <ligand>
        <name>substrate</name>
    </ligand>
</feature>
<feature type="binding site" evidence="2">
    <location>
        <position position="149"/>
    </location>
    <ligand>
        <name>substrate</name>
    </ligand>
</feature>
<keyword id="KW-0489">Methyltransferase</keyword>
<keyword id="KW-1185">Reference proteome</keyword>
<keyword id="KW-0949">S-adenosyl-L-methionine</keyword>
<keyword id="KW-0808">Transferase</keyword>
<keyword id="KW-0819">tRNA processing</keyword>
<protein>
    <recommendedName>
        <fullName evidence="2">tRNA (guanine-N(7)-)-methyltransferase</fullName>
        <ecNumber evidence="2">2.1.1.33</ecNumber>
    </recommendedName>
    <alternativeName>
        <fullName evidence="2">tRNA (guanine(46)-N(7))-methyltransferase</fullName>
    </alternativeName>
    <alternativeName>
        <fullName evidence="2">tRNA(m7G46)-methyltransferase</fullName>
    </alternativeName>
</protein>
<organism>
    <name type="scientific">Synechococcus sp. (strain WH7803)</name>
    <dbReference type="NCBI Taxonomy" id="32051"/>
    <lineage>
        <taxon>Bacteria</taxon>
        <taxon>Bacillati</taxon>
        <taxon>Cyanobacteriota</taxon>
        <taxon>Cyanophyceae</taxon>
        <taxon>Synechococcales</taxon>
        <taxon>Synechococcaceae</taxon>
        <taxon>Synechococcus</taxon>
    </lineage>
</organism>
<dbReference type="EC" id="2.1.1.33" evidence="2"/>
<dbReference type="EMBL" id="CT971583">
    <property type="protein sequence ID" value="CAK22757.1"/>
    <property type="molecule type" value="Genomic_DNA"/>
</dbReference>
<dbReference type="SMR" id="A5GIJ2"/>
<dbReference type="STRING" id="32051.SynWH7803_0331"/>
<dbReference type="KEGG" id="syx:SynWH7803_0331"/>
<dbReference type="eggNOG" id="COG0220">
    <property type="taxonomic scope" value="Bacteria"/>
</dbReference>
<dbReference type="HOGENOM" id="CLU_050910_1_3_3"/>
<dbReference type="OrthoDB" id="9802090at2"/>
<dbReference type="UniPathway" id="UPA00989"/>
<dbReference type="Proteomes" id="UP000001566">
    <property type="component" value="Chromosome"/>
</dbReference>
<dbReference type="GO" id="GO:0043527">
    <property type="term" value="C:tRNA methyltransferase complex"/>
    <property type="evidence" value="ECO:0007669"/>
    <property type="project" value="TreeGrafter"/>
</dbReference>
<dbReference type="GO" id="GO:0008176">
    <property type="term" value="F:tRNA (guanine(46)-N7)-methyltransferase activity"/>
    <property type="evidence" value="ECO:0007669"/>
    <property type="project" value="UniProtKB-UniRule"/>
</dbReference>
<dbReference type="CDD" id="cd02440">
    <property type="entry name" value="AdoMet_MTases"/>
    <property type="match status" value="1"/>
</dbReference>
<dbReference type="Gene3D" id="3.40.50.150">
    <property type="entry name" value="Vaccinia Virus protein VP39"/>
    <property type="match status" value="1"/>
</dbReference>
<dbReference type="HAMAP" id="MF_01057">
    <property type="entry name" value="tRNA_methyltr_TrmB"/>
    <property type="match status" value="1"/>
</dbReference>
<dbReference type="InterPro" id="IPR029063">
    <property type="entry name" value="SAM-dependent_MTases_sf"/>
</dbReference>
<dbReference type="InterPro" id="IPR003358">
    <property type="entry name" value="tRNA_(Gua-N-7)_MeTrfase_Trmb"/>
</dbReference>
<dbReference type="InterPro" id="IPR055361">
    <property type="entry name" value="tRNA_methyltr_TrmB_bact"/>
</dbReference>
<dbReference type="NCBIfam" id="TIGR00091">
    <property type="entry name" value="tRNA (guanosine(46)-N7)-methyltransferase TrmB"/>
    <property type="match status" value="1"/>
</dbReference>
<dbReference type="PANTHER" id="PTHR23417">
    <property type="entry name" value="3-DEOXY-D-MANNO-OCTULOSONIC-ACID TRANSFERASE/TRNA GUANINE-N 7 - -METHYLTRANSFERASE"/>
    <property type="match status" value="1"/>
</dbReference>
<dbReference type="PANTHER" id="PTHR23417:SF21">
    <property type="entry name" value="TRNA (GUANINE-N(7)-)-METHYLTRANSFERASE"/>
    <property type="match status" value="1"/>
</dbReference>
<dbReference type="Pfam" id="PF02390">
    <property type="entry name" value="Methyltransf_4"/>
    <property type="match status" value="1"/>
</dbReference>
<dbReference type="SUPFAM" id="SSF53335">
    <property type="entry name" value="S-adenosyl-L-methionine-dependent methyltransferases"/>
    <property type="match status" value="1"/>
</dbReference>
<dbReference type="PROSITE" id="PS51625">
    <property type="entry name" value="SAM_MT_TRMB"/>
    <property type="match status" value="1"/>
</dbReference>
<evidence type="ECO:0000250" key="1"/>
<evidence type="ECO:0000255" key="2">
    <source>
        <dbReference type="HAMAP-Rule" id="MF_01057"/>
    </source>
</evidence>
<accession>A5GIJ2</accession>
<name>TRMB_SYNPW</name>
<gene>
    <name evidence="2" type="primary">trmB</name>
    <name type="ordered locus">SynWH7803_0331</name>
</gene>